<feature type="signal peptide" evidence="3">
    <location>
        <begin position="1"/>
        <end position="26"/>
    </location>
</feature>
<feature type="chain" id="PRO_0000005795" description="Collagen alpha-1(XVIII) chain">
    <location>
        <begin position="27"/>
        <end position="1774"/>
    </location>
</feature>
<feature type="chain" id="PRO_0000005796" description="Endostatin">
    <location>
        <begin position="1591"/>
        <end position="1774"/>
    </location>
</feature>
<feature type="chain" id="PRO_0000441862" description="Non-collagenous domain 1" evidence="21">
    <location>
        <begin status="unknown"/>
        <end position="1774"/>
    </location>
</feature>
<feature type="domain" description="FZ" evidence="4">
    <location>
        <begin position="365"/>
        <end position="482"/>
    </location>
</feature>
<feature type="domain" description="Laminin G-like">
    <location>
        <begin position="522"/>
        <end position="704"/>
    </location>
</feature>
<feature type="domain" description="Collagen-like 1">
    <location>
        <begin position="823"/>
        <end position="878"/>
    </location>
</feature>
<feature type="domain" description="Collagen-like 2">
    <location>
        <begin position="953"/>
        <end position="1007"/>
    </location>
</feature>
<feature type="domain" description="Collagen-like 3">
    <location>
        <begin position="1008"/>
        <end position="1041"/>
    </location>
</feature>
<feature type="domain" description="Collagen-like 4">
    <location>
        <begin position="1066"/>
        <end position="1117"/>
    </location>
</feature>
<feature type="domain" description="Collagen-like 5">
    <location>
        <begin position="1118"/>
        <end position="1147"/>
    </location>
</feature>
<feature type="domain" description="Collagen-like 6">
    <location>
        <begin position="1162"/>
        <end position="1202"/>
    </location>
</feature>
<feature type="domain" description="Collagen-like 7">
    <location>
        <begin position="1216"/>
        <end position="1264"/>
    </location>
</feature>
<feature type="region of interest" description="Nonhelical region 1 (NC1)">
    <location>
        <begin position="27"/>
        <end position="785"/>
    </location>
</feature>
<feature type="region of interest" description="Disordered" evidence="5">
    <location>
        <begin position="47"/>
        <end position="113"/>
    </location>
</feature>
<feature type="region of interest" description="Disordered" evidence="5">
    <location>
        <begin position="218"/>
        <end position="269"/>
    </location>
</feature>
<feature type="region of interest" description="Disordered" evidence="5">
    <location>
        <begin position="681"/>
        <end position="1458"/>
    </location>
</feature>
<feature type="region of interest" description="Triple-helical region 1 (COL1)">
    <location>
        <begin position="786"/>
        <end position="812"/>
    </location>
</feature>
<feature type="region of interest" description="Nonhelical region 2 (NC2)">
    <location>
        <begin position="813"/>
        <end position="822"/>
    </location>
</feature>
<feature type="region of interest" description="Triple-helical region 2 (COL2)">
    <location>
        <begin position="823"/>
        <end position="896"/>
    </location>
</feature>
<feature type="region of interest" description="Nonhelical region 3 (NC3)">
    <location>
        <begin position="897"/>
        <end position="920"/>
    </location>
</feature>
<feature type="region of interest" description="Triple-helical region 3 (COL3)">
    <location>
        <begin position="921"/>
        <end position="1042"/>
    </location>
</feature>
<feature type="region of interest" description="Nonhelical region 4 (NC4)">
    <location>
        <begin position="1043"/>
        <end position="1065"/>
    </location>
</feature>
<feature type="region of interest" description="Triple-helical region 4 (COL4)">
    <location>
        <begin position="1066"/>
        <end position="1148"/>
    </location>
</feature>
<feature type="region of interest" description="Nonhelical region 5 (NC5)">
    <location>
        <begin position="1149"/>
        <end position="1162"/>
    </location>
</feature>
<feature type="region of interest" description="Triple-helical region 5 (COL5)">
    <location>
        <begin position="1163"/>
        <end position="1204"/>
    </location>
</feature>
<feature type="region of interest" description="Nonhelical region 6 (NC6)">
    <location>
        <begin position="1205"/>
        <end position="1217"/>
    </location>
</feature>
<feature type="region of interest" description="Triple-helical region 6 (COL6)">
    <location>
        <begin position="1218"/>
        <end position="1290"/>
    </location>
</feature>
<feature type="region of interest" description="Nonhelical region 7 (NC7)">
    <location>
        <begin position="1291"/>
        <end position="1300"/>
    </location>
</feature>
<feature type="region of interest" description="Triple-helical region 7 (COL7)">
    <location>
        <begin position="1301"/>
        <end position="1333"/>
    </location>
</feature>
<feature type="region of interest" description="Nonhelical region 8 (NC8)">
    <location>
        <begin position="1334"/>
        <end position="1345"/>
    </location>
</feature>
<feature type="region of interest" description="Triple-helical region 8 (COL8)">
    <location>
        <begin position="1346"/>
        <end position="1369"/>
    </location>
</feature>
<feature type="region of interest" description="Nonhelical region 9 (NC9)">
    <location>
        <begin position="1370"/>
        <end position="1376"/>
    </location>
</feature>
<feature type="region of interest" description="Triple-helical region 9 (COL9)">
    <location>
        <begin position="1377"/>
        <end position="1428"/>
    </location>
</feature>
<feature type="region of interest" description="Nonhelical region 10 (NC10)">
    <location>
        <begin position="1429"/>
        <end position="1441"/>
    </location>
</feature>
<feature type="region of interest" description="Triple-helical region 10 (COL10)">
    <location>
        <begin position="1442"/>
        <end position="1459"/>
    </location>
</feature>
<feature type="region of interest" description="Nonhelical region 11 (NC11)">
    <location>
        <begin position="1460"/>
        <end position="1774"/>
    </location>
</feature>
<feature type="region of interest" description="Non-collagenous domain 1 association domain" evidence="22">
    <location>
        <begin position="1474"/>
        <end position="1519"/>
    </location>
</feature>
<feature type="region of interest" description="Non-collagenous domain 1 hinge region" evidence="22">
    <location>
        <begin position="1520"/>
        <end position="1590"/>
    </location>
</feature>
<feature type="short sequence motif" description="Cell attachment site" evidence="3">
    <location>
        <begin position="1351"/>
        <end position="1353"/>
    </location>
</feature>
<feature type="compositionally biased region" description="Polar residues" evidence="5">
    <location>
        <begin position="55"/>
        <end position="87"/>
    </location>
</feature>
<feature type="compositionally biased region" description="Polar residues" evidence="5">
    <location>
        <begin position="244"/>
        <end position="256"/>
    </location>
</feature>
<feature type="compositionally biased region" description="Basic and acidic residues" evidence="5">
    <location>
        <begin position="708"/>
        <end position="717"/>
    </location>
</feature>
<feature type="compositionally biased region" description="Low complexity" evidence="5">
    <location>
        <begin position="809"/>
        <end position="824"/>
    </location>
</feature>
<feature type="compositionally biased region" description="Basic and acidic residues" evidence="5">
    <location>
        <begin position="839"/>
        <end position="855"/>
    </location>
</feature>
<feature type="compositionally biased region" description="Pro residues" evidence="5">
    <location>
        <begin position="884"/>
        <end position="895"/>
    </location>
</feature>
<feature type="compositionally biased region" description="Pro residues" evidence="5">
    <location>
        <begin position="925"/>
        <end position="935"/>
    </location>
</feature>
<feature type="compositionally biased region" description="Low complexity" evidence="5">
    <location>
        <begin position="951"/>
        <end position="963"/>
    </location>
</feature>
<feature type="compositionally biased region" description="Pro residues" evidence="5">
    <location>
        <begin position="967"/>
        <end position="982"/>
    </location>
</feature>
<feature type="compositionally biased region" description="Pro residues" evidence="5">
    <location>
        <begin position="1026"/>
        <end position="1041"/>
    </location>
</feature>
<feature type="compositionally biased region" description="Pro residues" evidence="5">
    <location>
        <begin position="1138"/>
        <end position="1147"/>
    </location>
</feature>
<feature type="compositionally biased region" description="Pro residues" evidence="5">
    <location>
        <begin position="1275"/>
        <end position="1289"/>
    </location>
</feature>
<feature type="compositionally biased region" description="Low complexity" evidence="5">
    <location>
        <begin position="1301"/>
        <end position="1317"/>
    </location>
</feature>
<feature type="compositionally biased region" description="Basic and acidic residues" evidence="5">
    <location>
        <begin position="1338"/>
        <end position="1362"/>
    </location>
</feature>
<feature type="compositionally biased region" description="Pro residues" evidence="5">
    <location>
        <begin position="1376"/>
        <end position="1388"/>
    </location>
</feature>
<feature type="compositionally biased region" description="Pro residues" evidence="5">
    <location>
        <begin position="1398"/>
        <end position="1407"/>
    </location>
</feature>
<feature type="compositionally biased region" description="Pro residues" evidence="5">
    <location>
        <begin position="1418"/>
        <end position="1431"/>
    </location>
</feature>
<feature type="compositionally biased region" description="Pro residues" evidence="5">
    <location>
        <begin position="1441"/>
        <end position="1453"/>
    </location>
</feature>
<feature type="binding site">
    <location>
        <position position="1591"/>
    </location>
    <ligand>
        <name>Zn(2+)</name>
        <dbReference type="ChEBI" id="CHEBI:29105"/>
    </ligand>
</feature>
<feature type="binding site">
    <location>
        <position position="1593"/>
    </location>
    <ligand>
        <name>Zn(2+)</name>
        <dbReference type="ChEBI" id="CHEBI:29105"/>
    </ligand>
</feature>
<feature type="binding site">
    <location>
        <position position="1595"/>
    </location>
    <ligand>
        <name>Zn(2+)</name>
        <dbReference type="ChEBI" id="CHEBI:29105"/>
    </ligand>
</feature>
<feature type="binding site">
    <location>
        <position position="1601"/>
    </location>
    <ligand>
        <name>Zn(2+)</name>
        <dbReference type="ChEBI" id="CHEBI:29105"/>
    </ligand>
</feature>
<feature type="binding site">
    <location>
        <position position="1666"/>
    </location>
    <ligand>
        <name>Zn(2+)</name>
        <dbReference type="ChEBI" id="CHEBI:29105"/>
    </ligand>
</feature>
<feature type="modified residue" description="Phosphothreonine" evidence="2">
    <location>
        <position position="730"/>
    </location>
</feature>
<feature type="glycosylation site" description="N-linked (GlcNAc...) asparagine" evidence="3">
    <location>
        <position position="354"/>
    </location>
</feature>
<feature type="glycosylation site" description="N-linked (GlcNAc...) asparagine" evidence="3">
    <location>
        <position position="361"/>
    </location>
</feature>
<feature type="glycosylation site" description="N-linked (GlcNAc...) asparagine" evidence="12">
    <location>
        <position position="585"/>
    </location>
</feature>
<feature type="glycosylation site" description="O-linked (Xyl...) (chondroitin sulfate) serine" evidence="2">
    <location>
        <position position="910"/>
    </location>
</feature>
<feature type="glycosylation site" description="N-linked (GlcNAc...) asparagine" evidence="3">
    <location>
        <position position="947"/>
    </location>
</feature>
<feature type="disulfide bond" evidence="4">
    <location>
        <begin position="370"/>
        <end position="433"/>
    </location>
</feature>
<feature type="disulfide bond" evidence="4">
    <location>
        <begin position="380"/>
        <end position="426"/>
    </location>
</feature>
<feature type="disulfide bond" evidence="4">
    <location>
        <begin position="417"/>
        <end position="455"/>
    </location>
</feature>
<feature type="disulfide bond" evidence="4">
    <location>
        <begin position="444"/>
        <end position="479"/>
    </location>
</feature>
<feature type="disulfide bond" evidence="4">
    <location>
        <begin position="448"/>
        <end position="468"/>
    </location>
</feature>
<feature type="disulfide bond" evidence="4 7">
    <location>
        <begin position="1623"/>
        <end position="1763"/>
    </location>
</feature>
<feature type="disulfide bond" evidence="4 7">
    <location>
        <begin position="1725"/>
        <end position="1755"/>
    </location>
</feature>
<feature type="splice variant" id="VSP_001157" description="In isoform 3." evidence="16 17 18 19 20">
    <location>
        <begin position="1"/>
        <end position="459"/>
    </location>
</feature>
<feature type="splice variant" id="VSP_008303" description="In isoform 2." evidence="21">
    <location>
        <begin position="240"/>
        <end position="486"/>
    </location>
</feature>
<feature type="splice variant" id="VSP_001158" description="In isoform 3." evidence="16 17 18 19 20">
    <original>AGDRLPVVCASLPSQEDGYCVFIGPAA</original>
    <variation>MAPRWHLLDVLTSLVLLLVARVSWAEP</variation>
    <location>
        <begin position="460"/>
        <end position="486"/>
    </location>
</feature>
<feature type="mutagenesis site" description="No effect on zinc binding." evidence="7">
    <original>H</original>
    <variation>A</variation>
    <location>
        <position position="1591"/>
    </location>
</feature>
<feature type="mutagenesis site" description="Reduces zinc binding by 60%. Abolishes zinc binding; when associated with A-1595." evidence="7">
    <original>H</original>
    <variation>A</variation>
    <location>
        <position position="1593"/>
    </location>
</feature>
<feature type="mutagenesis site" description="No effect on zinc binding. Abolishes zinc binding; when associated with A-1593." evidence="7">
    <original>D</original>
    <variation>A</variation>
    <location>
        <position position="1595"/>
    </location>
</feature>
<feature type="mutagenesis site" description="Abolishes zinc binding." evidence="7">
    <original>D</original>
    <variation>A</variation>
    <location>
        <position position="1666"/>
    </location>
</feature>
<feature type="sequence conflict" description="In Ref. 4; AAH66080." evidence="21" ref="4">
    <original>G</original>
    <variation>V</variation>
    <location>
        <position position="1046"/>
    </location>
</feature>
<feature type="sequence conflict" description="In Ref. 8; AAA19787." evidence="21" ref="8">
    <original>P</original>
    <variation>L</variation>
    <location>
        <position position="1147"/>
    </location>
</feature>
<feature type="sequence conflict" description="In Ref. 8; AAA19787." evidence="21" ref="8">
    <original>P</original>
    <variation>F</variation>
    <location>
        <position position="1194"/>
    </location>
</feature>
<feature type="sequence conflict" description="In Ref. 8; AAA19787." evidence="21" ref="8">
    <original>A</original>
    <variation>R</variation>
    <location>
        <position position="1211"/>
    </location>
</feature>
<feature type="sequence conflict" description="In Ref. 6; BAC27554." evidence="21" ref="6">
    <original>D</original>
    <variation>V</variation>
    <location>
        <position position="1347"/>
    </location>
</feature>
<feature type="sequence conflict" description="In Ref. 1; AAA20657, 2; AAC52901/AAC52902/AAC52903 and 8; AAA19787." evidence="21" ref="1 2 8">
    <original>P</original>
    <variation>R</variation>
    <location>
        <position position="1404"/>
    </location>
</feature>
<feature type="sequence conflict" description="In Ref. 8; AAA19787." evidence="21" ref="8">
    <original>P</original>
    <variation>L</variation>
    <location>
        <position position="1513"/>
    </location>
</feature>
<feature type="sequence conflict" description="In Ref. 8; AAA19787." evidence="21" ref="8">
    <original>L</original>
    <variation>F</variation>
    <location>
        <position position="1523"/>
    </location>
</feature>
<feature type="sequence conflict" description="In Ref. 8; AAA19787." evidence="21" ref="8">
    <original>L</original>
    <variation>V</variation>
    <location>
        <position position="1684"/>
    </location>
</feature>
<feature type="strand" evidence="27">
    <location>
        <begin position="1600"/>
        <end position="1604"/>
    </location>
</feature>
<feature type="strand" evidence="26">
    <location>
        <begin position="1611"/>
        <end position="1614"/>
    </location>
</feature>
<feature type="helix" evidence="27">
    <location>
        <begin position="1615"/>
        <end position="1629"/>
    </location>
</feature>
<feature type="strand" evidence="27">
    <location>
        <begin position="1636"/>
        <end position="1639"/>
    </location>
</feature>
<feature type="helix" evidence="27">
    <location>
        <begin position="1647"/>
        <end position="1650"/>
    </location>
</feature>
<feature type="helix" evidence="27">
    <location>
        <begin position="1653"/>
        <end position="1655"/>
    </location>
</feature>
<feature type="turn" evidence="27">
    <location>
        <begin position="1656"/>
        <end position="1658"/>
    </location>
</feature>
<feature type="strand" evidence="27">
    <location>
        <begin position="1668"/>
        <end position="1671"/>
    </location>
</feature>
<feature type="helix" evidence="27">
    <location>
        <begin position="1673"/>
        <end position="1676"/>
    </location>
</feature>
<feature type="strand" evidence="27">
    <location>
        <begin position="1678"/>
        <end position="1680"/>
    </location>
</feature>
<feature type="turn" evidence="27">
    <location>
        <begin position="1698"/>
        <end position="1700"/>
    </location>
</feature>
<feature type="strand" evidence="27">
    <location>
        <begin position="1704"/>
        <end position="1706"/>
    </location>
</feature>
<feature type="strand" evidence="27">
    <location>
        <begin position="1708"/>
        <end position="1710"/>
    </location>
</feature>
<feature type="helix" evidence="27">
    <location>
        <begin position="1725"/>
        <end position="1728"/>
    </location>
</feature>
<feature type="strand" evidence="27">
    <location>
        <begin position="1736"/>
        <end position="1741"/>
    </location>
</feature>
<feature type="helix" evidence="27">
    <location>
        <begin position="1742"/>
        <end position="1744"/>
    </location>
</feature>
<feature type="strand" evidence="27">
    <location>
        <begin position="1751"/>
        <end position="1754"/>
    </location>
</feature>
<feature type="strand" evidence="27">
    <location>
        <begin position="1762"/>
        <end position="1765"/>
    </location>
</feature>
<gene>
    <name evidence="25" type="primary">Col18a1</name>
</gene>
<keyword id="KW-0002">3D-structure</keyword>
<keyword id="KW-0877">Alternative promoter usage</keyword>
<keyword id="KW-0025">Alternative splicing</keyword>
<keyword id="KW-0084">Basement membrane</keyword>
<keyword id="KW-0130">Cell adhesion</keyword>
<keyword id="KW-0176">Collagen</keyword>
<keyword id="KW-0903">Direct protein sequencing</keyword>
<keyword id="KW-1015">Disulfide bond</keyword>
<keyword id="KW-0272">Extracellular matrix</keyword>
<keyword id="KW-0325">Glycoprotein</keyword>
<keyword id="KW-0379">Hydroxylation</keyword>
<keyword id="KW-0479">Metal-binding</keyword>
<keyword id="KW-0597">Phosphoprotein</keyword>
<keyword id="KW-0654">Proteoglycan</keyword>
<keyword id="KW-1185">Reference proteome</keyword>
<keyword id="KW-0677">Repeat</keyword>
<keyword id="KW-0964">Secreted</keyword>
<keyword id="KW-0732">Signal</keyword>
<keyword id="KW-0862">Zinc</keyword>
<name>COIA1_MOUSE</name>
<comment type="function">
    <text evidence="2">Probably plays a major role in determining the retinal structure as well as in the closure of the neural tube.</text>
</comment>
<comment type="function">
    <molecule>Non-collagenous domain 1</molecule>
    <text evidence="2">May regulate extracellular matrix-dependent motility and morphogenesis of endothelial and non-endothelial cells; the function requires homotrimerization and implicates MAPK signaling.</text>
</comment>
<comment type="function">
    <molecule>Endostatin</molecule>
    <text evidence="2 10 14">Potently inhibits endothelial cell proliferation and angiogenesis. May inhibit angiogenesis by binding to the heparan sulfate proteoglycans involved in growth factor signaling (PubMed:9008168). Inhibits VEGFA isoform VEGF165-induced endothelial cell proliferation and migration. Seems to inhibit VEGFA-mediated signaling by blocking the interaction of VEGFA to its receptor KDR/VEGFR2 (PubMed:12029087). Modulates endothelial cell migration in an integrin-dependent manner implicating integrin ITGA5:ITGB1 and to a lesser extent ITGAV:ITGB3 and ITGAV:ITGB5 (PubMed:11158588). May negatively regulate the activity of homotrimeric non-collagenous domain 1 (By similarity).</text>
</comment>
<comment type="subunit">
    <molecule>Non-collagenous domain 1</molecule>
    <text evidence="9">Forms homotrimers. Recombinant non-collagenous domain 1 has stronger affinity to NID1, HSPG2 and laminin-1:NID1 complex and lower affinity to FBLN1 and FBLN2 than endostatin (PubMed:10966814).</text>
</comment>
<comment type="subunit">
    <molecule>Endostatin</molecule>
    <text evidence="9 10 11 15">Monomeric (PubMed:9687493). Interacts with KDR/VEGFR2 (PubMed:12029087). Interacts with the ITGA5:ITGB1 complex (PubMed:11158588). Interacts with NID1, HSPG2, laminin-1:NID1 complex, FBLN1 and FBLN2 (PubMed:10966814, PubMed:11158588, PubMed:12029087).</text>
</comment>
<comment type="subcellular location">
    <subcellularLocation>
        <location evidence="1">Secreted</location>
        <location evidence="1">Extracellular space</location>
        <location evidence="1">Extracellular matrix</location>
    </subcellularLocation>
    <subcellularLocation>
        <location evidence="15">Secreted</location>
        <location evidence="15">Extracellular space</location>
        <location evidence="15">Extracellular matrix</location>
        <location evidence="15">Basement membrane</location>
    </subcellularLocation>
</comment>
<comment type="subcellular location">
    <molecule>Non-collagenous domain 1</molecule>
    <subcellularLocation>
        <location evidence="24">Secreted</location>
        <location evidence="24">Extracellular space</location>
        <location evidence="24">Extracellular matrix</location>
        <location evidence="24">Basement membrane</location>
    </subcellularLocation>
    <subcellularLocation>
        <location evidence="6">Secreted</location>
    </subcellularLocation>
</comment>
<comment type="subcellular location">
    <molecule>Endostatin</molecule>
    <subcellularLocation>
        <location evidence="6 23">Secreted</location>
    </subcellularLocation>
    <subcellularLocation>
        <location evidence="21">Secreted</location>
        <location evidence="21">Extracellular space</location>
        <location evidence="21">Extracellular matrix</location>
        <location evidence="21">Basement membrane</location>
    </subcellularLocation>
</comment>
<comment type="alternative products">
    <event type="alternative promoter"/>
    <event type="alternative splicing"/>
    <isoform>
        <id>P39061-3</id>
        <name>1</name>
        <name>NC1-764</name>
        <sequence type="displayed"/>
    </isoform>
    <isoform>
        <id>P39061-1</id>
        <name>2</name>
        <name>Long</name>
        <name>NC1-517</name>
        <sequence type="described" ref="VSP_008303"/>
    </isoform>
    <isoform>
        <id>P39061-2</id>
        <name>3</name>
        <name>Short</name>
        <name>NC1-301</name>
        <sequence type="described" ref="VSP_001157 VSP_001158"/>
    </isoform>
</comment>
<comment type="tissue specificity">
    <text evidence="13">Expressed in liver, kidney, lung, skeletal muscle and testis.</text>
</comment>
<comment type="PTM">
    <text>Prolines at the third position of the tripeptide repeating unit (G-X-Y) of the triple-helical regions are hydroxylated.</text>
</comment>
<comment type="PTM">
    <text evidence="2 6 8 24">Undergoes proteolytic processing by CTSL/cathepsin-L and elastase-like proteases to generate both non-collagenous domain 1 trimers and endostatin monomers (PubMed:10716919). In tissue extracts (brain, skeletal muscle, heart, kidney, testis and liver) predominantly bands of approximately 38 kDa are detected; recombinant non-collagenous domain 1 shows similar mobility. In vitro, several proteolytic cleavage sites in the non-collagenous domain 1 hinge region generating different endostatin-like peptides are reported.</text>
</comment>
<comment type="miscellaneous">
    <molecule>Isoform 1</molecule>
    <text>Produced by alternative promoter usage.</text>
</comment>
<comment type="miscellaneous">
    <molecule>Isoform 2</molecule>
    <text evidence="21">Produced by alternative splicing of isoform 1.</text>
</comment>
<comment type="miscellaneous">
    <molecule>Isoform 3</molecule>
    <text evidence="21">Produced by alternative promoter usage.</text>
</comment>
<comment type="similarity">
    <text evidence="21">Belongs to the multiplexin collagen family.</text>
</comment>
<comment type="caution">
    <text evidence="21">Non-collagenous domain 1 seems to be the predominant tissue form from which endostatin is cleaved. However, the proteolytic cleavage site to generate non-collagenous domain 1 is not known. Soluble recombinant non-collagenous domain 1 amenable to biochemical studies has been used instead; its molecular weight corresponds to probable non-collagenous domain 1 immunoblot bands seen in tissue extracts.</text>
</comment>
<sequence length="1774" mass="182172">MAPDPSRRLCLLLLLLLSCRLVPASADGNSLSPLNPLVWLWPPKTSDSLEGPVSKPQNSSPVQSTENPTTHVVPQDGLTEQQTTPASSELPPEEEEEEDQKAGQGGSPATPAVPIPLVAPAASPDMKEENVAGVGAKILNVAQGIRSFVQLWDEDSTIGHSAGTEVPDSSIPTVLPSPAELSSAPQGSKTTLWLSSAIPSSPDAQTTEAGTLAVPTQLPPFQSNLQAPLGRPSAPPDFPGRAFLSSSTDQGSSWGNQEPPRQPQHLEGKGFLPMTARSSQQHRHSDVHSDIHGHVPLLPLVTGPLVTASLSVHGLLSVPSSDPSGQLSQVAALPGFPGTWVSHVAPSSGTGLSNDSALAGNGSLTSTSRCLPLPPTLTLCSRLGIGHFWLPNHLHHTDSVEVEATVQAWGRFLHTNCHPFLAWFFCLLLAPSCGPGPPPPLPPCRQFCEALEDECWNYLAGDRLPVVCASLPSQEDGYCVFIGPAAENVAEEVGLLQLLGDPLPEKISQIDDPHVGPAYIFGPDSNSGQVAQYHFPKLFFRDFSLLFHVRPATEAAGVLFAITDAAQVVVSLGVKLSEVRDGQQNISLLYTEPGASQTQTGASFRLPAFVGQWTHFALSVDGGSVALYVDCEEFQRVPFARASQGLELERGAGLFVGQAGTADPDKFQGMISELKVRKTPRVSPVHCLDEEDDDEDRASGDFGSGFEESSKSHKEDTSLLPGLPQPPPVTSPPLAGGSTTEDPRTEETEEDAAVDSIGAETLPGTGSSGAWDEAIQNPGRGLIKGGMKGQKGEPGAQGPPGPAGPQGPAGPVVQSPNSQPVPGAQGPPGPQGPPGKDGTPGRDGEPGDPGEDGRPGDTGPQGFPGTPGDVGPKGEKGDPGIGPRGPPGPPGPPGPSFRQDKLTFIDMEGSGFSGDIESLRGPRGFPGPPGPPGVPGLPGEPGRFGINGSYAPGPAGLPGVPGKEGPPGFPGPPGPPGPPGKEGPPGVAGQKGSVGDVGIPGPKGSKGDLGPIGMPGKSGLAGSPGPVGPPGPPGPPGPPGPGFAAGFDDMEGSGIPLWTTARSSDGLQGPPGSPGLKGDPGVAGLPGAKGEVGADGAQGIPGPPGREGAAGSPGPKGEKGMPGEKGNPGKDGVGRPGLPGPPGPPGPVIYVSSEDKAIVSTPGPEGKPGYAGFPGPAGPKGDLGSKGEQGLPGPKGEKGEPGTIFSPDGRALGHPQKGAKGEPGFRGPPGPYGRPGHKGEIGFPGRPGRPGTNGLKGEKGEPGDASLGFSMRGLPGPPGPPGPPGPPGMPIYDSNAFVESGRPGLPGQQGVQGPSGPKGDKGEVGPPGPPGQFPIDLFHLEAEMKGDKGDRGDAGQKGERGEPGAPGGGFFSSSVPGPPGPPGYPGIPGPKGESIRGPPGPPGPQGPPGIGYEGRQGPPGPPGPPGPPSFPGPHRQTVSVPGPPGPPGPPGPPGAMGASAGQVRIWATYQTMLDKIREVPEGWLIFVAEREELYVRVRNGFRKVLLEARTALPRGTGNEVAALQPPLVQLHEGSPYTRREYSYSTARPWRADDILANPPRLPDRQPYPGVPHHHSSYVHLPPARPTLSLAHTHQDFQPVLHLVALNTPLSGGMRGIRGADFQCFQQARAVGLSGTFRAFLSSRLQDLYSIVRRADRGSVPIVNLKDEVLSPSWDSLFSGSQGQLQPGARIFSFDGRDVLRHPAWPQKSVWHGSDPSGRRLMESYCETWRTETTGATGQASSLLSGRLLEQKAASCHNSYIVLCIENSFMTSFSK</sequence>
<organism>
    <name type="scientific">Mus musculus</name>
    <name type="common">Mouse</name>
    <dbReference type="NCBI Taxonomy" id="10090"/>
    <lineage>
        <taxon>Eukaryota</taxon>
        <taxon>Metazoa</taxon>
        <taxon>Chordata</taxon>
        <taxon>Craniata</taxon>
        <taxon>Vertebrata</taxon>
        <taxon>Euteleostomi</taxon>
        <taxon>Mammalia</taxon>
        <taxon>Eutheria</taxon>
        <taxon>Euarchontoglires</taxon>
        <taxon>Glires</taxon>
        <taxon>Rodentia</taxon>
        <taxon>Myomorpha</taxon>
        <taxon>Muroidea</taxon>
        <taxon>Muridae</taxon>
        <taxon>Murinae</taxon>
        <taxon>Mus</taxon>
        <taxon>Mus</taxon>
    </lineage>
</organism>
<reference key="1">
    <citation type="journal article" date="1994" name="J. Biol. Chem.">
        <title>Primary structure of the alpha 1 chain of mouse type XVIII collagen, partial structure of the corresponding gene, and comparison of the alpha 1(XVIII) chain with its homologue, the alpha 1(XV) collagen chain.</title>
        <authorList>
            <person name="Rehn M.V."/>
            <person name="Hintikka E."/>
            <person name="Pihlajaniemi T."/>
        </authorList>
    </citation>
    <scope>NUCLEOTIDE SEQUENCE [GENOMIC DNA / MRNA] (ISOFORM 3)</scope>
    <source>
        <strain>BALB/cJ</strain>
        <tissue>Liver</tissue>
    </source>
</reference>
<reference key="2">
    <citation type="journal article" date="1996" name="Genomics">
        <title>Characterization of the mouse gene for the alpha-1 chain of type XVIII collagen (COL18A1) reveals that the three variant N-terminal polypeptide forms are transcribed from two widely separated promoters.</title>
        <authorList>
            <person name="Rehn M."/>
            <person name="Hintikka E."/>
            <person name="Pihlajaniemi T."/>
        </authorList>
    </citation>
    <scope>NUCLEOTIDE SEQUENCE [GENOMIC DNA] (ISOFORMS 1; 2 AND 3)</scope>
</reference>
<reference key="3">
    <citation type="journal article" date="2009" name="PLoS Biol.">
        <title>Lineage-specific biology revealed by a finished genome assembly of the mouse.</title>
        <authorList>
            <person name="Church D.M."/>
            <person name="Goodstadt L."/>
            <person name="Hillier L.W."/>
            <person name="Zody M.C."/>
            <person name="Goldstein S."/>
            <person name="She X."/>
            <person name="Bult C.J."/>
            <person name="Agarwala R."/>
            <person name="Cherry J.L."/>
            <person name="DiCuccio M."/>
            <person name="Hlavina W."/>
            <person name="Kapustin Y."/>
            <person name="Meric P."/>
            <person name="Maglott D."/>
            <person name="Birtle Z."/>
            <person name="Marques A.C."/>
            <person name="Graves T."/>
            <person name="Zhou S."/>
            <person name="Teague B."/>
            <person name="Potamousis K."/>
            <person name="Churas C."/>
            <person name="Place M."/>
            <person name="Herschleb J."/>
            <person name="Runnheim R."/>
            <person name="Forrest D."/>
            <person name="Amos-Landgraf J."/>
            <person name="Schwartz D.C."/>
            <person name="Cheng Z."/>
            <person name="Lindblad-Toh K."/>
            <person name="Eichler E.E."/>
            <person name="Ponting C.P."/>
        </authorList>
    </citation>
    <scope>NUCLEOTIDE SEQUENCE [LARGE SCALE GENOMIC DNA]</scope>
    <source>
        <strain>C57BL/6J</strain>
    </source>
</reference>
<reference key="4">
    <citation type="journal article" date="2004" name="Genome Res.">
        <title>The status, quality, and expansion of the NIH full-length cDNA project: the Mammalian Gene Collection (MGC).</title>
        <authorList>
            <consortium name="The MGC Project Team"/>
        </authorList>
    </citation>
    <scope>NUCLEOTIDE SEQUENCE [LARGE SCALE MRNA] (ISOFORM 3)</scope>
    <source>
        <strain>C57BL/6J</strain>
        <tissue>Brain</tissue>
        <tissue>Embryo</tissue>
    </source>
</reference>
<reference key="5">
    <citation type="journal article" date="1994" name="Proc. Natl. Acad. Sci. U.S.A.">
        <title>Alpha 1(XVIII), a collagen chain with frequent interruptions in the collagenous sequence, a distinct tissue distribution, and homology with type XV collagen.</title>
        <authorList>
            <person name="Rehn M.V."/>
            <person name="Pihlajaniemi T."/>
        </authorList>
    </citation>
    <scope>NUCLEOTIDE SEQUENCE [MRNA] OF 1-1387 (ISOFORM 3)</scope>
</reference>
<reference key="6">
    <citation type="journal article" date="2005" name="Science">
        <title>The transcriptional landscape of the mammalian genome.</title>
        <authorList>
            <person name="Carninci P."/>
            <person name="Kasukawa T."/>
            <person name="Katayama S."/>
            <person name="Gough J."/>
            <person name="Frith M.C."/>
            <person name="Maeda N."/>
            <person name="Oyama R."/>
            <person name="Ravasi T."/>
            <person name="Lenhard B."/>
            <person name="Wells C."/>
            <person name="Kodzius R."/>
            <person name="Shimokawa K."/>
            <person name="Bajic V.B."/>
            <person name="Brenner S.E."/>
            <person name="Batalov S."/>
            <person name="Forrest A.R."/>
            <person name="Zavolan M."/>
            <person name="Davis M.J."/>
            <person name="Wilming L.G."/>
            <person name="Aidinis V."/>
            <person name="Allen J.E."/>
            <person name="Ambesi-Impiombato A."/>
            <person name="Apweiler R."/>
            <person name="Aturaliya R.N."/>
            <person name="Bailey T.L."/>
            <person name="Bansal M."/>
            <person name="Baxter L."/>
            <person name="Beisel K.W."/>
            <person name="Bersano T."/>
            <person name="Bono H."/>
            <person name="Chalk A.M."/>
            <person name="Chiu K.P."/>
            <person name="Choudhary V."/>
            <person name="Christoffels A."/>
            <person name="Clutterbuck D.R."/>
            <person name="Crowe M.L."/>
            <person name="Dalla E."/>
            <person name="Dalrymple B.P."/>
            <person name="de Bono B."/>
            <person name="Della Gatta G."/>
            <person name="di Bernardo D."/>
            <person name="Down T."/>
            <person name="Engstrom P."/>
            <person name="Fagiolini M."/>
            <person name="Faulkner G."/>
            <person name="Fletcher C.F."/>
            <person name="Fukushima T."/>
            <person name="Furuno M."/>
            <person name="Futaki S."/>
            <person name="Gariboldi M."/>
            <person name="Georgii-Hemming P."/>
            <person name="Gingeras T.R."/>
            <person name="Gojobori T."/>
            <person name="Green R.E."/>
            <person name="Gustincich S."/>
            <person name="Harbers M."/>
            <person name="Hayashi Y."/>
            <person name="Hensch T.K."/>
            <person name="Hirokawa N."/>
            <person name="Hill D."/>
            <person name="Huminiecki L."/>
            <person name="Iacono M."/>
            <person name="Ikeo K."/>
            <person name="Iwama A."/>
            <person name="Ishikawa T."/>
            <person name="Jakt M."/>
            <person name="Kanapin A."/>
            <person name="Katoh M."/>
            <person name="Kawasawa Y."/>
            <person name="Kelso J."/>
            <person name="Kitamura H."/>
            <person name="Kitano H."/>
            <person name="Kollias G."/>
            <person name="Krishnan S.P."/>
            <person name="Kruger A."/>
            <person name="Kummerfeld S.K."/>
            <person name="Kurochkin I.V."/>
            <person name="Lareau L.F."/>
            <person name="Lazarevic D."/>
            <person name="Lipovich L."/>
            <person name="Liu J."/>
            <person name="Liuni S."/>
            <person name="McWilliam S."/>
            <person name="Madan Babu M."/>
            <person name="Madera M."/>
            <person name="Marchionni L."/>
            <person name="Matsuda H."/>
            <person name="Matsuzawa S."/>
            <person name="Miki H."/>
            <person name="Mignone F."/>
            <person name="Miyake S."/>
            <person name="Morris K."/>
            <person name="Mottagui-Tabar S."/>
            <person name="Mulder N."/>
            <person name="Nakano N."/>
            <person name="Nakauchi H."/>
            <person name="Ng P."/>
            <person name="Nilsson R."/>
            <person name="Nishiguchi S."/>
            <person name="Nishikawa S."/>
            <person name="Nori F."/>
            <person name="Ohara O."/>
            <person name="Okazaki Y."/>
            <person name="Orlando V."/>
            <person name="Pang K.C."/>
            <person name="Pavan W.J."/>
            <person name="Pavesi G."/>
            <person name="Pesole G."/>
            <person name="Petrovsky N."/>
            <person name="Piazza S."/>
            <person name="Reed J."/>
            <person name="Reid J.F."/>
            <person name="Ring B.Z."/>
            <person name="Ringwald M."/>
            <person name="Rost B."/>
            <person name="Ruan Y."/>
            <person name="Salzberg S.L."/>
            <person name="Sandelin A."/>
            <person name="Schneider C."/>
            <person name="Schoenbach C."/>
            <person name="Sekiguchi K."/>
            <person name="Semple C.A."/>
            <person name="Seno S."/>
            <person name="Sessa L."/>
            <person name="Sheng Y."/>
            <person name="Shibata Y."/>
            <person name="Shimada H."/>
            <person name="Shimada K."/>
            <person name="Silva D."/>
            <person name="Sinclair B."/>
            <person name="Sperling S."/>
            <person name="Stupka E."/>
            <person name="Sugiura K."/>
            <person name="Sultana R."/>
            <person name="Takenaka Y."/>
            <person name="Taki K."/>
            <person name="Tammoja K."/>
            <person name="Tan S.L."/>
            <person name="Tang S."/>
            <person name="Taylor M.S."/>
            <person name="Tegner J."/>
            <person name="Teichmann S.A."/>
            <person name="Ueda H.R."/>
            <person name="van Nimwegen E."/>
            <person name="Verardo R."/>
            <person name="Wei C.L."/>
            <person name="Yagi K."/>
            <person name="Yamanishi H."/>
            <person name="Zabarovsky E."/>
            <person name="Zhu S."/>
            <person name="Zimmer A."/>
            <person name="Hide W."/>
            <person name="Bult C."/>
            <person name="Grimmond S.M."/>
            <person name="Teasdale R.D."/>
            <person name="Liu E.T."/>
            <person name="Brusic V."/>
            <person name="Quackenbush J."/>
            <person name="Wahlestedt C."/>
            <person name="Mattick J.S."/>
            <person name="Hume D.A."/>
            <person name="Kai C."/>
            <person name="Sasaki D."/>
            <person name="Tomaru Y."/>
            <person name="Fukuda S."/>
            <person name="Kanamori-Katayama M."/>
            <person name="Suzuki M."/>
            <person name="Aoki J."/>
            <person name="Arakawa T."/>
            <person name="Iida J."/>
            <person name="Imamura K."/>
            <person name="Itoh M."/>
            <person name="Kato T."/>
            <person name="Kawaji H."/>
            <person name="Kawagashira N."/>
            <person name="Kawashima T."/>
            <person name="Kojima M."/>
            <person name="Kondo S."/>
            <person name="Konno H."/>
            <person name="Nakano K."/>
            <person name="Ninomiya N."/>
            <person name="Nishio T."/>
            <person name="Okada M."/>
            <person name="Plessy C."/>
            <person name="Shibata K."/>
            <person name="Shiraki T."/>
            <person name="Suzuki S."/>
            <person name="Tagami M."/>
            <person name="Waki K."/>
            <person name="Watahiki A."/>
            <person name="Okamura-Oho Y."/>
            <person name="Suzuki H."/>
            <person name="Kawai J."/>
            <person name="Hayashizaki Y."/>
        </authorList>
    </citation>
    <scope>NUCLEOTIDE SEQUENCE [LARGE SCALE MRNA] OF 1-1347 (ISOFORM 3)</scope>
    <scope>NUCLEOTIDE SEQUENCE [LARGE SCALE MRNA] OF 1615-1774</scope>
    <source>
        <strain>C57BL/6J</strain>
        <tissue>Head</tissue>
    </source>
</reference>
<reference key="7">
    <citation type="journal article" date="1995" name="J. Biol. Chem.">
        <title>Identification of three N-terminal ends of type XVIII collagen chains and tissue-specific differences in the expression of the corresponding transcripts. The longest form contains a novel motif homologous to rat and Drosophila frizzled proteins.</title>
        <authorList>
            <person name="Rehn M."/>
            <person name="Pihlajaniemi T."/>
        </authorList>
    </citation>
    <scope>NUCLEOTIDE SEQUENCE [MRNA] OF 1-562 (ISOFORMS 1 AND 3)</scope>
    <scope>TISSUE SPECIFICITY</scope>
</reference>
<reference key="8">
    <citation type="journal article" date="1994" name="Proc. Natl. Acad. Sci. U.S.A.">
        <title>Isolation and sequencing of cDNAs for proteins with multiple domains of Gly-Xaa-Yaa repeats identify a distinct family of collagenous proteins.</title>
        <authorList>
            <person name="Oh S.P."/>
            <person name="Kamagata Y."/>
            <person name="Muragaki Y."/>
            <person name="Timmons S."/>
            <person name="Ooshima A."/>
            <person name="Olsen B.R."/>
        </authorList>
    </citation>
    <scope>NUCLEOTIDE SEQUENCE [MRNA] OF 487-1774</scope>
    <source>
        <tissue>Liver</tissue>
    </source>
</reference>
<reference key="9">
    <citation type="journal article" date="1993" name="Biochem. Biophys. Res. Commun.">
        <title>Identification of a novel collagen chain represented by extensive interruptions in the triple-helical region.</title>
        <authorList>
            <person name="Abe N."/>
            <person name="Muragaki Y."/>
            <person name="Yoshioka H."/>
            <person name="Inoue H."/>
            <person name="Ninomiya Y."/>
        </authorList>
    </citation>
    <scope>NUCLEOTIDE SEQUENCE [MRNA] OF 635-1774</scope>
    <source>
        <tissue>Embryo</tissue>
    </source>
</reference>
<reference key="10">
    <citation type="journal article" date="2000" name="Clin. Hemorheol. Microcirc.">
        <title>Anticancer treatment of endostatin gene therapy by targeting tumor neovasculature in C57/BL mice.</title>
        <authorList>
            <person name="Jia S."/>
            <person name="Zhu F."/>
            <person name="Li H."/>
            <person name="He F."/>
            <person name="Xiu R.-J."/>
        </authorList>
    </citation>
    <scope>NUCLEOTIDE SEQUENCE [MRNA] OF 1591-1774</scope>
</reference>
<reference key="11">
    <citation type="journal article" date="1997" name="Cell">
        <title>Endostatin: an endogenous inhibitor of angiogenesis and tumor growth.</title>
        <authorList>
            <person name="O'Reilly M.S."/>
            <person name="Boehm T."/>
            <person name="Shing Y."/>
            <person name="Fukai N."/>
            <person name="Vasios G."/>
            <person name="Lane W.S."/>
            <person name="Flynn E."/>
            <person name="Birkhead J.R."/>
            <person name="Olsen B.R."/>
            <person name="Folkman J."/>
        </authorList>
    </citation>
    <scope>CHARACTERIZATION OF ENDOSTATIN</scope>
    <scope>PROTEIN SEQUENCE OF 1591-1610</scope>
</reference>
<reference key="12">
    <citation type="journal article" date="1998" name="EMBO J.">
        <title>Structure, function and tissue forms of the C-terminal globular domain of collagen XVIII containing the angiogenesis inhibitor endostatin.</title>
        <authorList>
            <person name="Sasaki T."/>
            <person name="Fukai N."/>
            <person name="Mann K."/>
            <person name="Goehring W."/>
            <person name="Olsen B.R."/>
            <person name="Timpl R."/>
        </authorList>
    </citation>
    <scope>PROTEOLYTIC CLEAVAGE</scope>
    <scope>SUBUNIT</scope>
    <scope>SUBCELLULAR LOCATION</scope>
</reference>
<reference key="13">
    <citation type="journal article" date="1999" name="Cancer Res.">
        <title>The generation of endostatin is mediated by elastase.</title>
        <authorList>
            <person name="Wen W."/>
            <person name="Moses M.A."/>
            <person name="Wiederschain D."/>
            <person name="Arbiser J.L."/>
            <person name="Folkman J."/>
        </authorList>
    </citation>
    <scope>PROTEOLYTIC CLEAVAGE</scope>
    <scope>SUBCELLULAR LOCATION</scope>
</reference>
<reference key="14">
    <citation type="journal article" date="2000" name="EMBO J.">
        <title>Secreted cathepsin L generates endostatin from collagen XVIII.</title>
        <authorList>
            <person name="Felbor U."/>
            <person name="Dreier L."/>
            <person name="Bryant R.A."/>
            <person name="Ploegh H.L."/>
            <person name="Olsen B.R."/>
            <person name="Mothes W."/>
        </authorList>
    </citation>
    <scope>PROTEOLYTIC CLEAVAGE</scope>
</reference>
<reference key="15">
    <citation type="journal article" date="2000" name="J. Mol. Biol.">
        <title>Endostatins derived from collagens XV and XVIII differ in structural and binding properties, tissue distribution and anti-angiogenic activity.</title>
        <authorList>
            <person name="Sasaki T."/>
            <person name="Larsson H."/>
            <person name="Tisi D."/>
            <person name="Claesson-Welsh L."/>
            <person name="Hohenester E."/>
            <person name="Timpl R."/>
        </authorList>
    </citation>
    <scope>SUBUNIT</scope>
</reference>
<reference key="16">
    <citation type="journal article" date="2001" name="Proc. Natl. Acad. Sci. U.S.A.">
        <title>Interaction of endostatin with integrins implicated in angiogenesis.</title>
        <authorList>
            <person name="Rehn M."/>
            <person name="Veikkola T."/>
            <person name="Kukk-Valdre E."/>
            <person name="Nakamura H."/>
            <person name="Ilmonen M."/>
            <person name="Lombardo C."/>
            <person name="Pihlajaniemi T."/>
            <person name="Alitalo K."/>
            <person name="Vuori K."/>
        </authorList>
    </citation>
    <scope>FUNCTION</scope>
    <scope>INTERACTION WITH ITGA5:ITGB1</scope>
</reference>
<reference key="17">
    <citation type="journal article" date="2002" name="J. Biol. Chem.">
        <title>Endostatin blocks vascular endothelial growth factor-mediated signaling via direct interaction with KDR/Flk-1.</title>
        <authorList>
            <person name="Kim Y.M."/>
            <person name="Hwang S."/>
            <person name="Kim Y.M."/>
            <person name="Pyun B.J."/>
            <person name="Kim T.Y."/>
            <person name="Lee S.T."/>
            <person name="Gho Y.S."/>
            <person name="Kwon Y.G."/>
        </authorList>
    </citation>
    <scope>FUNCTION</scope>
    <scope>INTERACTION WITH KDR</scope>
</reference>
<reference key="18">
    <citation type="journal article" date="2009" name="Nat. Biotechnol.">
        <title>Mass-spectrometric identification and relative quantification of N-linked cell surface glycoproteins.</title>
        <authorList>
            <person name="Wollscheid B."/>
            <person name="Bausch-Fluck D."/>
            <person name="Henderson C."/>
            <person name="O'Brien R."/>
            <person name="Bibel M."/>
            <person name="Schiess R."/>
            <person name="Aebersold R."/>
            <person name="Watts J.D."/>
        </authorList>
    </citation>
    <scope>GLYCOSYLATION [LARGE SCALE ANALYSIS] AT ASN-585</scope>
</reference>
<reference key="19">
    <citation type="journal article" date="2010" name="Cell">
        <title>A tissue-specific atlas of mouse protein phosphorylation and expression.</title>
        <authorList>
            <person name="Huttlin E.L."/>
            <person name="Jedrychowski M.P."/>
            <person name="Elias J.E."/>
            <person name="Goswami T."/>
            <person name="Rad R."/>
            <person name="Beausoleil S.A."/>
            <person name="Villen J."/>
            <person name="Haas W."/>
            <person name="Sowa M.E."/>
            <person name="Gygi S.P."/>
        </authorList>
    </citation>
    <scope>IDENTIFICATION BY MASS SPECTROMETRY [LARGE SCALE ANALYSIS]</scope>
    <source>
        <tissue>Brown adipose tissue</tissue>
        <tissue>Heart</tissue>
        <tissue>Kidney</tissue>
        <tissue>Liver</tissue>
        <tissue>Lung</tissue>
        <tissue>Pancreas</tissue>
        <tissue>Spleen</tissue>
        <tissue>Testis</tissue>
    </source>
</reference>
<reference key="20">
    <citation type="journal article" date="1998" name="EMBO J.">
        <title>Crystal structure of the angiogenesis inhibitor endostatin at 1.5-A resolution.</title>
        <authorList>
            <person name="Hohenester E."/>
            <person name="Sasaki T."/>
            <person name="Olsen B.R."/>
            <person name="Timpl R."/>
        </authorList>
    </citation>
    <scope>X-RAY CRYSTALLOGRAPHY (1.5 ANGSTROMS) OF ENDOSTATIN</scope>
</reference>
<reference key="21">
    <citation type="journal article" date="2000" name="J. Mol. Biol.">
        <title>Variable zinc coordination in endostatin.</title>
        <authorList>
            <person name="Hohenester E."/>
            <person name="Sasaki T."/>
            <person name="Mann K."/>
            <person name="Timpl R."/>
        </authorList>
    </citation>
    <scope>X-RAY CRYSTALLOGRAPHY (2.2 ANGSTROMS) OF 1589-1774</scope>
    <scope>DISULFIDE BONDS</scope>
    <scope>MUTAGENESIS OF HIS-1591; HIS-1593; ASP-1595 AND ASP-1666</scope>
    <scope>ZINC-BINDING SITES</scope>
</reference>
<proteinExistence type="evidence at protein level"/>
<dbReference type="EMBL" id="U03714">
    <property type="protein sequence ID" value="AAA20657.1"/>
    <property type="molecule type" value="mRNA"/>
</dbReference>
<dbReference type="EMBL" id="U03715">
    <property type="protein sequence ID" value="AAC52901.1"/>
    <property type="molecule type" value="Genomic_DNA"/>
</dbReference>
<dbReference type="EMBL" id="U34606">
    <property type="protein sequence ID" value="AAC52901.1"/>
    <property type="status" value="JOINED"/>
    <property type="molecule type" value="Genomic_DNA"/>
</dbReference>
<dbReference type="EMBL" id="U34608">
    <property type="protein sequence ID" value="AAC52901.1"/>
    <property type="status" value="JOINED"/>
    <property type="molecule type" value="Genomic_DNA"/>
</dbReference>
<dbReference type="EMBL" id="U34609">
    <property type="protein sequence ID" value="AAC52901.1"/>
    <property type="status" value="JOINED"/>
    <property type="molecule type" value="Genomic_DNA"/>
</dbReference>
<dbReference type="EMBL" id="U34610">
    <property type="protein sequence ID" value="AAC52901.1"/>
    <property type="status" value="JOINED"/>
    <property type="molecule type" value="Genomic_DNA"/>
</dbReference>
<dbReference type="EMBL" id="U34611">
    <property type="protein sequence ID" value="AAC52901.1"/>
    <property type="status" value="JOINED"/>
    <property type="molecule type" value="Genomic_DNA"/>
</dbReference>
<dbReference type="EMBL" id="U34612">
    <property type="protein sequence ID" value="AAC52901.1"/>
    <property type="status" value="JOINED"/>
    <property type="molecule type" value="Genomic_DNA"/>
</dbReference>
<dbReference type="EMBL" id="U34613">
    <property type="protein sequence ID" value="AAC52901.1"/>
    <property type="status" value="JOINED"/>
    <property type="molecule type" value="Genomic_DNA"/>
</dbReference>
<dbReference type="EMBL" id="U03716">
    <property type="protein sequence ID" value="AAC52901.1"/>
    <property type="status" value="JOINED"/>
    <property type="molecule type" value="Genomic_DNA"/>
</dbReference>
<dbReference type="EMBL" id="U03718">
    <property type="protein sequence ID" value="AAC52901.1"/>
    <property type="status" value="JOINED"/>
    <property type="molecule type" value="Genomic_DNA"/>
</dbReference>
<dbReference type="EMBL" id="U03715">
    <property type="protein sequence ID" value="AAC52902.1"/>
    <property type="molecule type" value="Genomic_DNA"/>
</dbReference>
<dbReference type="EMBL" id="U34607">
    <property type="protein sequence ID" value="AAC52902.1"/>
    <property type="status" value="JOINED"/>
    <property type="molecule type" value="Genomic_DNA"/>
</dbReference>
<dbReference type="EMBL" id="U34608">
    <property type="protein sequence ID" value="AAC52902.1"/>
    <property type="status" value="JOINED"/>
    <property type="molecule type" value="Genomic_DNA"/>
</dbReference>
<dbReference type="EMBL" id="U34609">
    <property type="protein sequence ID" value="AAC52902.1"/>
    <property type="status" value="JOINED"/>
    <property type="molecule type" value="Genomic_DNA"/>
</dbReference>
<dbReference type="EMBL" id="U34610">
    <property type="protein sequence ID" value="AAC52902.1"/>
    <property type="status" value="JOINED"/>
    <property type="molecule type" value="Genomic_DNA"/>
</dbReference>
<dbReference type="EMBL" id="U34611">
    <property type="protein sequence ID" value="AAC52902.1"/>
    <property type="status" value="JOINED"/>
    <property type="molecule type" value="Genomic_DNA"/>
</dbReference>
<dbReference type="EMBL" id="U34612">
    <property type="protein sequence ID" value="AAC52902.1"/>
    <property type="status" value="JOINED"/>
    <property type="molecule type" value="Genomic_DNA"/>
</dbReference>
<dbReference type="EMBL" id="U34613">
    <property type="protein sequence ID" value="AAC52902.1"/>
    <property type="status" value="JOINED"/>
    <property type="molecule type" value="Genomic_DNA"/>
</dbReference>
<dbReference type="EMBL" id="U03716">
    <property type="protein sequence ID" value="AAC52902.1"/>
    <property type="status" value="JOINED"/>
    <property type="molecule type" value="Genomic_DNA"/>
</dbReference>
<dbReference type="EMBL" id="U03718">
    <property type="protein sequence ID" value="AAC52902.1"/>
    <property type="status" value="JOINED"/>
    <property type="molecule type" value="Genomic_DNA"/>
</dbReference>
<dbReference type="EMBL" id="U03715">
    <property type="protein sequence ID" value="AAC52903.1"/>
    <property type="molecule type" value="Genomic_DNA"/>
</dbReference>
<dbReference type="EMBL" id="U03716">
    <property type="protein sequence ID" value="AAC52903.1"/>
    <property type="status" value="JOINED"/>
    <property type="molecule type" value="Genomic_DNA"/>
</dbReference>
<dbReference type="EMBL" id="U03718">
    <property type="protein sequence ID" value="AAC52903.1"/>
    <property type="status" value="JOINED"/>
    <property type="molecule type" value="Genomic_DNA"/>
</dbReference>
<dbReference type="EMBL" id="U34607">
    <property type="protein sequence ID" value="AAC52903.1"/>
    <property type="status" value="JOINED"/>
    <property type="molecule type" value="Genomic_DNA"/>
</dbReference>
<dbReference type="EMBL" id="U34608">
    <property type="protein sequence ID" value="AAC52903.1"/>
    <property type="status" value="JOINED"/>
    <property type="molecule type" value="Genomic_DNA"/>
</dbReference>
<dbReference type="EMBL" id="U34609">
    <property type="protein sequence ID" value="AAC52903.1"/>
    <property type="status" value="JOINED"/>
    <property type="molecule type" value="Genomic_DNA"/>
</dbReference>
<dbReference type="EMBL" id="U34610">
    <property type="protein sequence ID" value="AAC52903.1"/>
    <property type="status" value="JOINED"/>
    <property type="molecule type" value="Genomic_DNA"/>
</dbReference>
<dbReference type="EMBL" id="U34611">
    <property type="protein sequence ID" value="AAC52903.1"/>
    <property type="status" value="JOINED"/>
    <property type="molecule type" value="Genomic_DNA"/>
</dbReference>
<dbReference type="EMBL" id="U34612">
    <property type="protein sequence ID" value="AAC52903.1"/>
    <property type="status" value="JOINED"/>
    <property type="molecule type" value="Genomic_DNA"/>
</dbReference>
<dbReference type="EMBL" id="U34613">
    <property type="protein sequence ID" value="AAC52903.1"/>
    <property type="status" value="JOINED"/>
    <property type="molecule type" value="Genomic_DNA"/>
</dbReference>
<dbReference type="EMBL" id="AC055777">
    <property type="status" value="NOT_ANNOTATED_CDS"/>
    <property type="molecule type" value="Genomic_DNA"/>
</dbReference>
<dbReference type="EMBL" id="AC159334">
    <property type="status" value="NOT_ANNOTATED_CDS"/>
    <property type="molecule type" value="Genomic_DNA"/>
</dbReference>
<dbReference type="EMBL" id="BC064817">
    <property type="protein sequence ID" value="AAH64817.1"/>
    <property type="molecule type" value="mRNA"/>
</dbReference>
<dbReference type="EMBL" id="BC066080">
    <property type="protein sequence ID" value="AAH66080.1"/>
    <property type="molecule type" value="mRNA"/>
</dbReference>
<dbReference type="EMBL" id="L16898">
    <property type="protein sequence ID" value="AAA37434.1"/>
    <property type="molecule type" value="mRNA"/>
</dbReference>
<dbReference type="EMBL" id="AK031798">
    <property type="protein sequence ID" value="BAC27554.1"/>
    <property type="molecule type" value="mRNA"/>
</dbReference>
<dbReference type="EMBL" id="AK014292">
    <property type="protein sequence ID" value="BAB29249.1"/>
    <property type="molecule type" value="mRNA"/>
</dbReference>
<dbReference type="EMBL" id="U11636">
    <property type="protein sequence ID" value="AAC52178.1"/>
    <property type="molecule type" value="mRNA"/>
</dbReference>
<dbReference type="EMBL" id="U11637">
    <property type="protein sequence ID" value="AAC52179.1"/>
    <property type="molecule type" value="mRNA"/>
</dbReference>
<dbReference type="EMBL" id="L22545">
    <property type="protein sequence ID" value="AAA19787.1"/>
    <property type="molecule type" value="mRNA"/>
</dbReference>
<dbReference type="EMBL" id="D17546">
    <property type="protein sequence ID" value="BAA04483.1"/>
    <property type="molecule type" value="mRNA"/>
</dbReference>
<dbReference type="EMBL" id="AF257775">
    <property type="protein sequence ID" value="AAF69009.1"/>
    <property type="molecule type" value="mRNA"/>
</dbReference>
<dbReference type="CCDS" id="CCDS23953.1">
    <molecule id="P39061-2"/>
</dbReference>
<dbReference type="CCDS" id="CCDS48604.1">
    <molecule id="P39061-1"/>
</dbReference>
<dbReference type="PIR" id="A56101">
    <property type="entry name" value="A56101"/>
</dbReference>
<dbReference type="PIR" id="B56101">
    <property type="entry name" value="B56101"/>
</dbReference>
<dbReference type="RefSeq" id="NP_001103461.1">
    <molecule id="P39061-1"/>
    <property type="nucleotide sequence ID" value="NM_001109991.2"/>
</dbReference>
<dbReference type="RefSeq" id="NP_034059.2">
    <molecule id="P39061-2"/>
    <property type="nucleotide sequence ID" value="NM_009929.3"/>
</dbReference>
<dbReference type="PDB" id="1DY0">
    <property type="method" value="X-ray"/>
    <property type="resolution" value="2.20 A"/>
    <property type="chains" value="A=1587-1774"/>
</dbReference>
<dbReference type="PDB" id="1DY1">
    <property type="method" value="X-ray"/>
    <property type="resolution" value="2.20 A"/>
    <property type="chains" value="A=1587-1774"/>
</dbReference>
<dbReference type="PDB" id="1KOE">
    <property type="method" value="X-ray"/>
    <property type="resolution" value="1.50 A"/>
    <property type="chains" value="A=1597-1768"/>
</dbReference>
<dbReference type="PDBsum" id="1DY0"/>
<dbReference type="PDBsum" id="1DY1"/>
<dbReference type="PDBsum" id="1KOE"/>
<dbReference type="SMR" id="P39061"/>
<dbReference type="BioGRID" id="198812">
    <property type="interactions" value="6"/>
</dbReference>
<dbReference type="ComplexPortal" id="CPX-2996">
    <property type="entry name" value="Collagen type XVIII trimer"/>
</dbReference>
<dbReference type="FunCoup" id="P39061">
    <property type="interactions" value="189"/>
</dbReference>
<dbReference type="IntAct" id="P39061">
    <property type="interactions" value="1"/>
</dbReference>
<dbReference type="MINT" id="P39061"/>
<dbReference type="STRING" id="10090.ENSMUSP00000101049"/>
<dbReference type="GlyCosmos" id="P39061">
    <property type="glycosylation" value="4 sites, No reported glycans"/>
</dbReference>
<dbReference type="GlyGen" id="P39061">
    <property type="glycosylation" value="7 sites, 2 N-linked glycans (2 sites)"/>
</dbReference>
<dbReference type="iPTMnet" id="P39061"/>
<dbReference type="PhosphoSitePlus" id="P39061"/>
<dbReference type="jPOST" id="P39061"/>
<dbReference type="PeptideAtlas" id="P39061"/>
<dbReference type="ProteomicsDB" id="285239">
    <molecule id="P39061-3"/>
</dbReference>
<dbReference type="ProteomicsDB" id="285240">
    <molecule id="P39061-1"/>
</dbReference>
<dbReference type="ProteomicsDB" id="285241">
    <molecule id="P39061-2"/>
</dbReference>
<dbReference type="Antibodypedia" id="2814">
    <property type="antibodies" value="606 antibodies from 37 providers"/>
</dbReference>
<dbReference type="DNASU" id="12822"/>
<dbReference type="Ensembl" id="ENSMUST00000081654.13">
    <molecule id="P39061-2"/>
    <property type="protein sequence ID" value="ENSMUSP00000080358.7"/>
    <property type="gene ID" value="ENSMUSG00000001435.16"/>
</dbReference>
<dbReference type="Ensembl" id="ENSMUST00000105409.8">
    <molecule id="P39061-1"/>
    <property type="protein sequence ID" value="ENSMUSP00000101049.2"/>
    <property type="gene ID" value="ENSMUSG00000001435.16"/>
</dbReference>
<dbReference type="GeneID" id="12822"/>
<dbReference type="KEGG" id="mmu:12822"/>
<dbReference type="UCSC" id="uc007fvg.1">
    <molecule id="P39061-1"/>
    <property type="organism name" value="mouse"/>
</dbReference>
<dbReference type="UCSC" id="uc007fvh.2">
    <molecule id="P39061-2"/>
    <property type="organism name" value="mouse"/>
</dbReference>
<dbReference type="AGR" id="MGI:88451"/>
<dbReference type="CTD" id="80781"/>
<dbReference type="MGI" id="MGI:88451">
    <property type="gene designation" value="Col18a1"/>
</dbReference>
<dbReference type="VEuPathDB" id="HostDB:ENSMUSG00000001435"/>
<dbReference type="eggNOG" id="KOG3546">
    <property type="taxonomic scope" value="Eukaryota"/>
</dbReference>
<dbReference type="GeneTree" id="ENSGT00940000158212"/>
<dbReference type="HOGENOM" id="CLU_004003_1_0_1"/>
<dbReference type="InParanoid" id="P39061"/>
<dbReference type="OrthoDB" id="5983381at2759"/>
<dbReference type="PhylomeDB" id="P39061"/>
<dbReference type="TreeFam" id="TF315821"/>
<dbReference type="Reactome" id="R-MMU-1442490">
    <property type="pathway name" value="Collagen degradation"/>
</dbReference>
<dbReference type="Reactome" id="R-MMU-1592389">
    <property type="pathway name" value="Activation of Matrix Metalloproteinases"/>
</dbReference>
<dbReference type="Reactome" id="R-MMU-1650814">
    <property type="pathway name" value="Collagen biosynthesis and modifying enzymes"/>
</dbReference>
<dbReference type="Reactome" id="R-MMU-2022090">
    <property type="pathway name" value="Assembly of collagen fibrils and other multimeric structures"/>
</dbReference>
<dbReference type="Reactome" id="R-MMU-216083">
    <property type="pathway name" value="Integrin cell surface interactions"/>
</dbReference>
<dbReference type="Reactome" id="R-MMU-8948216">
    <property type="pathway name" value="Collagen chain trimerization"/>
</dbReference>
<dbReference type="BioGRID-ORCS" id="12822">
    <property type="hits" value="3 hits in 62 CRISPR screens"/>
</dbReference>
<dbReference type="ChiTaRS" id="Col18a1">
    <property type="organism name" value="mouse"/>
</dbReference>
<dbReference type="EvolutionaryTrace" id="P39061"/>
<dbReference type="PRO" id="PR:P39061"/>
<dbReference type="Proteomes" id="UP000000589">
    <property type="component" value="Chromosome 10"/>
</dbReference>
<dbReference type="RNAct" id="P39061">
    <property type="molecule type" value="protein"/>
</dbReference>
<dbReference type="Bgee" id="ENSMUSG00000001435">
    <property type="expression patterns" value="Expressed in aorta tunica media and 276 other cell types or tissues"/>
</dbReference>
<dbReference type="ExpressionAtlas" id="P39061">
    <property type="expression patterns" value="baseline and differential"/>
</dbReference>
<dbReference type="GO" id="GO:0005604">
    <property type="term" value="C:basement membrane"/>
    <property type="evidence" value="ECO:0000314"/>
    <property type="project" value="MGI"/>
</dbReference>
<dbReference type="GO" id="GO:0005581">
    <property type="term" value="C:collagen trimer"/>
    <property type="evidence" value="ECO:0007669"/>
    <property type="project" value="UniProtKB-KW"/>
</dbReference>
<dbReference type="GO" id="GO:0062023">
    <property type="term" value="C:collagen-containing extracellular matrix"/>
    <property type="evidence" value="ECO:0007005"/>
    <property type="project" value="BHF-UCL"/>
</dbReference>
<dbReference type="GO" id="GO:0005615">
    <property type="term" value="C:extracellular space"/>
    <property type="evidence" value="ECO:0007005"/>
    <property type="project" value="BHF-UCL"/>
</dbReference>
<dbReference type="GO" id="GO:0046872">
    <property type="term" value="F:metal ion binding"/>
    <property type="evidence" value="ECO:0007669"/>
    <property type="project" value="UniProtKB-KW"/>
</dbReference>
<dbReference type="GO" id="GO:0001525">
    <property type="term" value="P:angiogenesis"/>
    <property type="evidence" value="ECO:0000314"/>
    <property type="project" value="MGI"/>
</dbReference>
<dbReference type="GO" id="GO:0043534">
    <property type="term" value="P:blood vessel endothelial cell migration"/>
    <property type="evidence" value="ECO:0000314"/>
    <property type="project" value="MGI"/>
</dbReference>
<dbReference type="GO" id="GO:0007155">
    <property type="term" value="P:cell adhesion"/>
    <property type="evidence" value="ECO:0007669"/>
    <property type="project" value="UniProtKB-KW"/>
</dbReference>
<dbReference type="GO" id="GO:0072577">
    <property type="term" value="P:endothelial cell apoptotic process"/>
    <property type="evidence" value="ECO:0000314"/>
    <property type="project" value="MGI"/>
</dbReference>
<dbReference type="GO" id="GO:0001886">
    <property type="term" value="P:endothelial cell morphogenesis"/>
    <property type="evidence" value="ECO:0000314"/>
    <property type="project" value="MGI"/>
</dbReference>
<dbReference type="GO" id="GO:0030198">
    <property type="term" value="P:extracellular matrix organization"/>
    <property type="evidence" value="ECO:0000315"/>
    <property type="project" value="MGI"/>
</dbReference>
<dbReference type="GO" id="GO:0043536">
    <property type="term" value="P:positive regulation of blood vessel endothelial cell migration"/>
    <property type="evidence" value="ECO:0000314"/>
    <property type="project" value="MGI"/>
</dbReference>
<dbReference type="GO" id="GO:2000353">
    <property type="term" value="P:positive regulation of endothelial cell apoptotic process"/>
    <property type="evidence" value="ECO:0000314"/>
    <property type="project" value="MGI"/>
</dbReference>
<dbReference type="GO" id="GO:1905564">
    <property type="term" value="P:positive regulation of vascular endothelial cell proliferation"/>
    <property type="evidence" value="ECO:0000314"/>
    <property type="project" value="MGI"/>
</dbReference>
<dbReference type="GO" id="GO:0101023">
    <property type="term" value="P:vascular endothelial cell proliferation"/>
    <property type="evidence" value="ECO:0000314"/>
    <property type="project" value="MGI"/>
</dbReference>
<dbReference type="CDD" id="cd07455">
    <property type="entry name" value="CRD_Collagen_XVIII"/>
    <property type="match status" value="1"/>
</dbReference>
<dbReference type="CDD" id="cd00247">
    <property type="entry name" value="Endostatin-like"/>
    <property type="match status" value="1"/>
</dbReference>
<dbReference type="CDD" id="cd00110">
    <property type="entry name" value="LamG"/>
    <property type="match status" value="1"/>
</dbReference>
<dbReference type="DisProt" id="DP02542"/>
<dbReference type="FunFam" id="1.10.2000.10:FF:000017">
    <property type="entry name" value="Alpha 1 type XVIII collagen"/>
    <property type="match status" value="1"/>
</dbReference>
<dbReference type="FunFam" id="3.10.100.10:FF:000008">
    <property type="entry name" value="collagen alpha-1(XVIII) chain isoform X1"/>
    <property type="match status" value="1"/>
</dbReference>
<dbReference type="FunFam" id="3.40.1620.70:FF:000003">
    <property type="entry name" value="Collagen type XVIII alpha 1"/>
    <property type="match status" value="1"/>
</dbReference>
<dbReference type="FunFam" id="2.60.120.200:FF:000039">
    <property type="entry name" value="Collagen XV alpha 1 chain"/>
    <property type="match status" value="1"/>
</dbReference>
<dbReference type="Gene3D" id="2.60.120.200">
    <property type="match status" value="1"/>
</dbReference>
<dbReference type="Gene3D" id="3.40.1620.70">
    <property type="match status" value="1"/>
</dbReference>
<dbReference type="Gene3D" id="1.10.2000.10">
    <property type="entry name" value="Frizzled cysteine-rich domain"/>
    <property type="match status" value="1"/>
</dbReference>
<dbReference type="Gene3D" id="3.10.100.10">
    <property type="entry name" value="Mannose-Binding Protein A, subunit A"/>
    <property type="match status" value="1"/>
</dbReference>
<dbReference type="InterPro" id="IPR016186">
    <property type="entry name" value="C-type_lectin-like/link_sf"/>
</dbReference>
<dbReference type="InterPro" id="IPR008160">
    <property type="entry name" value="Collagen"/>
</dbReference>
<dbReference type="InterPro" id="IPR050149">
    <property type="entry name" value="Collagen_superfamily"/>
</dbReference>
<dbReference type="InterPro" id="IPR035523">
    <property type="entry name" value="Collagen_XVIII_Fz"/>
</dbReference>
<dbReference type="InterPro" id="IPR010515">
    <property type="entry name" value="Collagenase_NC10/endostatin"/>
</dbReference>
<dbReference type="InterPro" id="IPR013320">
    <property type="entry name" value="ConA-like_dom_sf"/>
</dbReference>
<dbReference type="InterPro" id="IPR016187">
    <property type="entry name" value="CTDL_fold"/>
</dbReference>
<dbReference type="InterPro" id="IPR010363">
    <property type="entry name" value="DUF959_COL18_N"/>
</dbReference>
<dbReference type="InterPro" id="IPR020067">
    <property type="entry name" value="Frizzled_dom"/>
</dbReference>
<dbReference type="InterPro" id="IPR036790">
    <property type="entry name" value="Frizzled_dom_sf"/>
</dbReference>
<dbReference type="InterPro" id="IPR001791">
    <property type="entry name" value="Laminin_G"/>
</dbReference>
<dbReference type="InterPro" id="IPR048287">
    <property type="entry name" value="TSPN-like_N"/>
</dbReference>
<dbReference type="InterPro" id="IPR045463">
    <property type="entry name" value="XV/XVIII_trimerization_dom"/>
</dbReference>
<dbReference type="PANTHER" id="PTHR24023">
    <property type="entry name" value="COLLAGEN ALPHA"/>
    <property type="match status" value="1"/>
</dbReference>
<dbReference type="PANTHER" id="PTHR24023:SF1082">
    <property type="entry name" value="COLLAGEN TRIPLE HELIX REPEAT"/>
    <property type="match status" value="1"/>
</dbReference>
<dbReference type="Pfam" id="PF01391">
    <property type="entry name" value="Collagen"/>
    <property type="match status" value="5"/>
</dbReference>
<dbReference type="Pfam" id="PF20010">
    <property type="entry name" value="Collagen_trimer"/>
    <property type="match status" value="1"/>
</dbReference>
<dbReference type="Pfam" id="PF06121">
    <property type="entry name" value="DUF959"/>
    <property type="match status" value="1"/>
</dbReference>
<dbReference type="Pfam" id="PF06482">
    <property type="entry name" value="Endostatin"/>
    <property type="match status" value="1"/>
</dbReference>
<dbReference type="Pfam" id="PF01392">
    <property type="entry name" value="Fz"/>
    <property type="match status" value="1"/>
</dbReference>
<dbReference type="Pfam" id="PF13385">
    <property type="entry name" value="Laminin_G_3"/>
    <property type="match status" value="1"/>
</dbReference>
<dbReference type="SMART" id="SM00063">
    <property type="entry name" value="FRI"/>
    <property type="match status" value="1"/>
</dbReference>
<dbReference type="SMART" id="SM00210">
    <property type="entry name" value="TSPN"/>
    <property type="match status" value="1"/>
</dbReference>
<dbReference type="SUPFAM" id="SSF56436">
    <property type="entry name" value="C-type lectin-like"/>
    <property type="match status" value="1"/>
</dbReference>
<dbReference type="SUPFAM" id="SSF49899">
    <property type="entry name" value="Concanavalin A-like lectins/glucanases"/>
    <property type="match status" value="1"/>
</dbReference>
<dbReference type="SUPFAM" id="SSF63501">
    <property type="entry name" value="Frizzled cysteine-rich domain"/>
    <property type="match status" value="1"/>
</dbReference>
<dbReference type="PROSITE" id="PS50038">
    <property type="entry name" value="FZ"/>
    <property type="match status" value="1"/>
</dbReference>
<accession>P39061</accession>
<accession>Q60672</accession>
<accession>Q61434</accession>
<accession>Q61437</accession>
<accession>Q62001</accession>
<accession>Q62002</accession>
<accession>Q6NZK9</accession>
<accession>Q6P1Y4</accession>
<accession>Q8CCZ8</accession>
<accession>Q9CRT2</accession>
<accession>Q9JK63</accession>
<evidence type="ECO:0000250" key="1"/>
<evidence type="ECO:0000250" key="2">
    <source>
        <dbReference type="UniProtKB" id="P39060"/>
    </source>
</evidence>
<evidence type="ECO:0000255" key="3"/>
<evidence type="ECO:0000255" key="4">
    <source>
        <dbReference type="PROSITE-ProRule" id="PRU00090"/>
    </source>
</evidence>
<evidence type="ECO:0000256" key="5">
    <source>
        <dbReference type="SAM" id="MobiDB-lite"/>
    </source>
</evidence>
<evidence type="ECO:0000269" key="6">
    <source>
    </source>
</evidence>
<evidence type="ECO:0000269" key="7">
    <source>
    </source>
</evidence>
<evidence type="ECO:0000269" key="8">
    <source>
    </source>
</evidence>
<evidence type="ECO:0000269" key="9">
    <source>
    </source>
</evidence>
<evidence type="ECO:0000269" key="10">
    <source>
    </source>
</evidence>
<evidence type="ECO:0000269" key="11">
    <source>
    </source>
</evidence>
<evidence type="ECO:0000269" key="12">
    <source>
    </source>
</evidence>
<evidence type="ECO:0000269" key="13">
    <source>
    </source>
</evidence>
<evidence type="ECO:0000269" key="14">
    <source>
    </source>
</evidence>
<evidence type="ECO:0000269" key="15">
    <source>
    </source>
</evidence>
<evidence type="ECO:0000303" key="16">
    <source>
    </source>
</evidence>
<evidence type="ECO:0000303" key="17">
    <source>
    </source>
</evidence>
<evidence type="ECO:0000303" key="18">
    <source>
    </source>
</evidence>
<evidence type="ECO:0000303" key="19">
    <source>
    </source>
</evidence>
<evidence type="ECO:0000303" key="20">
    <source>
    </source>
</evidence>
<evidence type="ECO:0000305" key="21"/>
<evidence type="ECO:0000305" key="22">
    <source>
    </source>
</evidence>
<evidence type="ECO:0000305" key="23">
    <source>
    </source>
</evidence>
<evidence type="ECO:0000305" key="24">
    <source>
    </source>
</evidence>
<evidence type="ECO:0000312" key="25">
    <source>
        <dbReference type="MGI" id="MGI:88451"/>
    </source>
</evidence>
<evidence type="ECO:0007829" key="26">
    <source>
        <dbReference type="PDB" id="1DY0"/>
    </source>
</evidence>
<evidence type="ECO:0007829" key="27">
    <source>
        <dbReference type="PDB" id="1KOE"/>
    </source>
</evidence>
<protein>
    <recommendedName>
        <fullName evidence="21">Collagen alpha-1(XVIII) chain</fullName>
    </recommendedName>
    <component>
        <recommendedName>
            <fullName evidence="21">Endostatin</fullName>
        </recommendedName>
    </component>
    <component>
        <recommendedName>
            <fullName evidence="21">Non-collagenous domain 1</fullName>
            <shortName>NC1</shortName>
        </recommendedName>
    </component>
</protein>